<organism>
    <name type="scientific">Staphylococcus carnosus (strain TM300)</name>
    <dbReference type="NCBI Taxonomy" id="396513"/>
    <lineage>
        <taxon>Bacteria</taxon>
        <taxon>Bacillati</taxon>
        <taxon>Bacillota</taxon>
        <taxon>Bacilli</taxon>
        <taxon>Bacillales</taxon>
        <taxon>Staphylococcaceae</taxon>
        <taxon>Staphylococcus</taxon>
    </lineage>
</organism>
<keyword id="KW-0143">Chaperone</keyword>
<keyword id="KW-0963">Cytoplasm</keyword>
<keyword id="KW-1185">Reference proteome</keyword>
<keyword id="KW-0346">Stress response</keyword>
<feature type="chain" id="PRO_1000164216" description="Protein GrpE">
    <location>
        <begin position="1"/>
        <end position="198"/>
    </location>
</feature>
<feature type="region of interest" description="Disordered" evidence="2">
    <location>
        <begin position="1"/>
        <end position="58"/>
    </location>
</feature>
<feature type="compositionally biased region" description="Basic and acidic residues" evidence="2">
    <location>
        <begin position="16"/>
        <end position="35"/>
    </location>
</feature>
<feature type="compositionally biased region" description="Basic and acidic residues" evidence="2">
    <location>
        <begin position="46"/>
        <end position="58"/>
    </location>
</feature>
<reference key="1">
    <citation type="journal article" date="2009" name="Appl. Environ. Microbiol.">
        <title>Genome analysis of the meat starter culture bacterium Staphylococcus carnosus TM300.</title>
        <authorList>
            <person name="Rosenstein R."/>
            <person name="Nerz C."/>
            <person name="Biswas L."/>
            <person name="Resch A."/>
            <person name="Raddatz G."/>
            <person name="Schuster S.C."/>
            <person name="Goetz F."/>
        </authorList>
    </citation>
    <scope>NUCLEOTIDE SEQUENCE [LARGE SCALE GENOMIC DNA]</scope>
    <source>
        <strain>TM300</strain>
    </source>
</reference>
<name>GRPE_STACT</name>
<sequence>MTEKDQSVNNEEFAEKEDNTAKDSNTDEQIEKTASEDDVQNDSSAVDDKEKEIQQLKEEVNEQEEKYLRLYAEFENYKRRIQNENQTLKTYQAQCVLTDILPTIDNIERALQIEGEDESFKSLQKGVQMVYESLLRALEENGLEKIEAVGQQFDPNFHQAVMQDEDDSFESNAVTQELQTGYKLKDRVLRPSMVKVNQ</sequence>
<dbReference type="EMBL" id="AM295250">
    <property type="protein sequence ID" value="CAL28110.1"/>
    <property type="molecule type" value="Genomic_DNA"/>
</dbReference>
<dbReference type="RefSeq" id="WP_015900450.1">
    <property type="nucleotide sequence ID" value="NC_012121.1"/>
</dbReference>
<dbReference type="SMR" id="B9DNK1"/>
<dbReference type="GeneID" id="93793628"/>
<dbReference type="KEGG" id="sca:SCA_1203"/>
<dbReference type="eggNOG" id="COG0576">
    <property type="taxonomic scope" value="Bacteria"/>
</dbReference>
<dbReference type="HOGENOM" id="CLU_057217_5_2_9"/>
<dbReference type="OrthoDB" id="9812586at2"/>
<dbReference type="BioCyc" id="SCAR396513:SCA_RS06025-MONOMER"/>
<dbReference type="Proteomes" id="UP000000444">
    <property type="component" value="Chromosome"/>
</dbReference>
<dbReference type="GO" id="GO:0005737">
    <property type="term" value="C:cytoplasm"/>
    <property type="evidence" value="ECO:0007669"/>
    <property type="project" value="UniProtKB-SubCell"/>
</dbReference>
<dbReference type="GO" id="GO:0000774">
    <property type="term" value="F:adenyl-nucleotide exchange factor activity"/>
    <property type="evidence" value="ECO:0007669"/>
    <property type="project" value="InterPro"/>
</dbReference>
<dbReference type="GO" id="GO:0042803">
    <property type="term" value="F:protein homodimerization activity"/>
    <property type="evidence" value="ECO:0007669"/>
    <property type="project" value="InterPro"/>
</dbReference>
<dbReference type="GO" id="GO:0051087">
    <property type="term" value="F:protein-folding chaperone binding"/>
    <property type="evidence" value="ECO:0007669"/>
    <property type="project" value="InterPro"/>
</dbReference>
<dbReference type="GO" id="GO:0051082">
    <property type="term" value="F:unfolded protein binding"/>
    <property type="evidence" value="ECO:0007669"/>
    <property type="project" value="TreeGrafter"/>
</dbReference>
<dbReference type="GO" id="GO:0006457">
    <property type="term" value="P:protein folding"/>
    <property type="evidence" value="ECO:0007669"/>
    <property type="project" value="InterPro"/>
</dbReference>
<dbReference type="CDD" id="cd00446">
    <property type="entry name" value="GrpE"/>
    <property type="match status" value="1"/>
</dbReference>
<dbReference type="FunFam" id="2.30.22.10:FF:000001">
    <property type="entry name" value="Protein GrpE"/>
    <property type="match status" value="1"/>
</dbReference>
<dbReference type="Gene3D" id="3.90.20.20">
    <property type="match status" value="1"/>
</dbReference>
<dbReference type="Gene3D" id="2.30.22.10">
    <property type="entry name" value="Head domain of nucleotide exchange factor GrpE"/>
    <property type="match status" value="1"/>
</dbReference>
<dbReference type="HAMAP" id="MF_01151">
    <property type="entry name" value="GrpE"/>
    <property type="match status" value="1"/>
</dbReference>
<dbReference type="InterPro" id="IPR000740">
    <property type="entry name" value="GrpE"/>
</dbReference>
<dbReference type="InterPro" id="IPR013805">
    <property type="entry name" value="GrpE_coiled_coil"/>
</dbReference>
<dbReference type="InterPro" id="IPR009012">
    <property type="entry name" value="GrpE_head"/>
</dbReference>
<dbReference type="NCBIfam" id="NF010738">
    <property type="entry name" value="PRK14140.1"/>
    <property type="match status" value="1"/>
</dbReference>
<dbReference type="PANTHER" id="PTHR21237">
    <property type="entry name" value="GRPE PROTEIN"/>
    <property type="match status" value="1"/>
</dbReference>
<dbReference type="PANTHER" id="PTHR21237:SF23">
    <property type="entry name" value="GRPE PROTEIN HOMOLOG, MITOCHONDRIAL"/>
    <property type="match status" value="1"/>
</dbReference>
<dbReference type="Pfam" id="PF01025">
    <property type="entry name" value="GrpE"/>
    <property type="match status" value="1"/>
</dbReference>
<dbReference type="PRINTS" id="PR00773">
    <property type="entry name" value="GRPEPROTEIN"/>
</dbReference>
<dbReference type="SUPFAM" id="SSF58014">
    <property type="entry name" value="Coiled-coil domain of nucleotide exchange factor GrpE"/>
    <property type="match status" value="1"/>
</dbReference>
<dbReference type="SUPFAM" id="SSF51064">
    <property type="entry name" value="Head domain of nucleotide exchange factor GrpE"/>
    <property type="match status" value="1"/>
</dbReference>
<dbReference type="PROSITE" id="PS01071">
    <property type="entry name" value="GRPE"/>
    <property type="match status" value="1"/>
</dbReference>
<comment type="function">
    <text evidence="1">Participates actively in the response to hyperosmotic and heat shock by preventing the aggregation of stress-denatured proteins, in association with DnaK and GrpE. It is the nucleotide exchange factor for DnaK and may function as a thermosensor. Unfolded proteins bind initially to DnaJ; upon interaction with the DnaJ-bound protein, DnaK hydrolyzes its bound ATP, resulting in the formation of a stable complex. GrpE releases ADP from DnaK; ATP binding to DnaK triggers the release of the substrate protein, thus completing the reaction cycle. Several rounds of ATP-dependent interactions between DnaJ, DnaK and GrpE are required for fully efficient folding.</text>
</comment>
<comment type="subunit">
    <text evidence="1">Homodimer.</text>
</comment>
<comment type="subcellular location">
    <subcellularLocation>
        <location evidence="1">Cytoplasm</location>
    </subcellularLocation>
</comment>
<comment type="similarity">
    <text evidence="1">Belongs to the GrpE family.</text>
</comment>
<proteinExistence type="inferred from homology"/>
<evidence type="ECO:0000255" key="1">
    <source>
        <dbReference type="HAMAP-Rule" id="MF_01151"/>
    </source>
</evidence>
<evidence type="ECO:0000256" key="2">
    <source>
        <dbReference type="SAM" id="MobiDB-lite"/>
    </source>
</evidence>
<accession>B9DNK1</accession>
<gene>
    <name evidence="1" type="primary">grpE</name>
    <name type="ordered locus">Sca_1203</name>
</gene>
<protein>
    <recommendedName>
        <fullName evidence="1">Protein GrpE</fullName>
    </recommendedName>
    <alternativeName>
        <fullName evidence="1">HSP-70 cofactor</fullName>
    </alternativeName>
</protein>